<sequence>MTELMRIAALFAATALAEIVGCYLPWLVLKEGRPVWLLVPAALSLALFAWLLTLHPSAAGRTYAAYGGVYIAVALVWLRVVDGVALTRWDVAGAVLALGGMAVIALQPRA</sequence>
<name>Y4425_BURL3</name>
<dbReference type="EMBL" id="CP000151">
    <property type="protein sequence ID" value="ABB08021.1"/>
    <property type="status" value="ALT_INIT"/>
    <property type="molecule type" value="Genomic_DNA"/>
</dbReference>
<dbReference type="RefSeq" id="WP_011351591.1">
    <property type="nucleotide sequence ID" value="NZ_WNDV01000016.1"/>
</dbReference>
<dbReference type="SMR" id="Q39HP5"/>
<dbReference type="GeneID" id="45094323"/>
<dbReference type="KEGG" id="bur:Bcep18194_A4425"/>
<dbReference type="PATRIC" id="fig|482957.22.peg.1324"/>
<dbReference type="HOGENOM" id="CLU_117653_2_0_4"/>
<dbReference type="Proteomes" id="UP000002705">
    <property type="component" value="Chromosome 1"/>
</dbReference>
<dbReference type="GO" id="GO:0005886">
    <property type="term" value="C:plasma membrane"/>
    <property type="evidence" value="ECO:0007669"/>
    <property type="project" value="UniProtKB-SubCell"/>
</dbReference>
<dbReference type="HAMAP" id="MF_00010">
    <property type="entry name" value="UPF0060"/>
    <property type="match status" value="1"/>
</dbReference>
<dbReference type="InterPro" id="IPR003844">
    <property type="entry name" value="UPF0060"/>
</dbReference>
<dbReference type="NCBIfam" id="NF002586">
    <property type="entry name" value="PRK02237.1"/>
    <property type="match status" value="1"/>
</dbReference>
<dbReference type="PANTHER" id="PTHR36116">
    <property type="entry name" value="UPF0060 MEMBRANE PROTEIN YNFA"/>
    <property type="match status" value="1"/>
</dbReference>
<dbReference type="PANTHER" id="PTHR36116:SF1">
    <property type="entry name" value="UPF0060 MEMBRANE PROTEIN YNFA"/>
    <property type="match status" value="1"/>
</dbReference>
<dbReference type="Pfam" id="PF02694">
    <property type="entry name" value="UPF0060"/>
    <property type="match status" value="1"/>
</dbReference>
<dbReference type="SUPFAM" id="SSF103481">
    <property type="entry name" value="Multidrug resistance efflux transporter EmrE"/>
    <property type="match status" value="1"/>
</dbReference>
<evidence type="ECO:0000255" key="1">
    <source>
        <dbReference type="HAMAP-Rule" id="MF_00010"/>
    </source>
</evidence>
<evidence type="ECO:0000305" key="2"/>
<feature type="chain" id="PRO_0000282213" description="UPF0060 membrane protein Bcep18194_A4425">
    <location>
        <begin position="1"/>
        <end position="110"/>
    </location>
</feature>
<feature type="transmembrane region" description="Helical" evidence="1">
    <location>
        <begin position="9"/>
        <end position="29"/>
    </location>
</feature>
<feature type="transmembrane region" description="Helical" evidence="1">
    <location>
        <begin position="34"/>
        <end position="54"/>
    </location>
</feature>
<feature type="transmembrane region" description="Helical" evidence="1">
    <location>
        <begin position="66"/>
        <end position="86"/>
    </location>
</feature>
<feature type="transmembrane region" description="Helical" evidence="1">
    <location>
        <begin position="88"/>
        <end position="108"/>
    </location>
</feature>
<reference key="1">
    <citation type="submission" date="2005-10" db="EMBL/GenBank/DDBJ databases">
        <title>Complete sequence of chromosome 1 of Burkholderia sp. 383.</title>
        <authorList>
            <consortium name="US DOE Joint Genome Institute"/>
            <person name="Copeland A."/>
            <person name="Lucas S."/>
            <person name="Lapidus A."/>
            <person name="Barry K."/>
            <person name="Detter J.C."/>
            <person name="Glavina T."/>
            <person name="Hammon N."/>
            <person name="Israni S."/>
            <person name="Pitluck S."/>
            <person name="Chain P."/>
            <person name="Malfatti S."/>
            <person name="Shin M."/>
            <person name="Vergez L."/>
            <person name="Schmutz J."/>
            <person name="Larimer F."/>
            <person name="Land M."/>
            <person name="Kyrpides N."/>
            <person name="Lykidis A."/>
            <person name="Richardson P."/>
        </authorList>
    </citation>
    <scope>NUCLEOTIDE SEQUENCE [LARGE SCALE GENOMIC DNA]</scope>
    <source>
        <strain>ATCC 17760 / DSM 23089 / LMG 22485 / NCIMB 9086 / R18194 / 383</strain>
    </source>
</reference>
<proteinExistence type="inferred from homology"/>
<organism>
    <name type="scientific">Burkholderia lata (strain ATCC 17760 / DSM 23089 / LMG 22485 / NCIMB 9086 / R18194 / 383)</name>
    <dbReference type="NCBI Taxonomy" id="482957"/>
    <lineage>
        <taxon>Bacteria</taxon>
        <taxon>Pseudomonadati</taxon>
        <taxon>Pseudomonadota</taxon>
        <taxon>Betaproteobacteria</taxon>
        <taxon>Burkholderiales</taxon>
        <taxon>Burkholderiaceae</taxon>
        <taxon>Burkholderia</taxon>
        <taxon>Burkholderia cepacia complex</taxon>
    </lineage>
</organism>
<keyword id="KW-0997">Cell inner membrane</keyword>
<keyword id="KW-1003">Cell membrane</keyword>
<keyword id="KW-0472">Membrane</keyword>
<keyword id="KW-0812">Transmembrane</keyword>
<keyword id="KW-1133">Transmembrane helix</keyword>
<accession>Q39HP5</accession>
<comment type="subcellular location">
    <subcellularLocation>
        <location evidence="1">Cell inner membrane</location>
        <topology evidence="1">Multi-pass membrane protein</topology>
    </subcellularLocation>
</comment>
<comment type="similarity">
    <text evidence="1">Belongs to the UPF0060 family.</text>
</comment>
<comment type="sequence caution" evidence="2">
    <conflict type="erroneous initiation">
        <sequence resource="EMBL-CDS" id="ABB08021"/>
    </conflict>
</comment>
<gene>
    <name type="ordered locus">Bcep18194_A4425</name>
</gene>
<protein>
    <recommendedName>
        <fullName evidence="1">UPF0060 membrane protein Bcep18194_A4425</fullName>
    </recommendedName>
</protein>